<accession>B5QUQ3</accession>
<dbReference type="EMBL" id="AM933172">
    <property type="protein sequence ID" value="CAR35234.1"/>
    <property type="molecule type" value="Genomic_DNA"/>
</dbReference>
<dbReference type="RefSeq" id="WP_001307474.1">
    <property type="nucleotide sequence ID" value="NC_011294.1"/>
</dbReference>
<dbReference type="GeneID" id="97443257"/>
<dbReference type="KEGG" id="set:SEN3658"/>
<dbReference type="HOGENOM" id="CLU_144811_5_2_6"/>
<dbReference type="Proteomes" id="UP000000613">
    <property type="component" value="Chromosome"/>
</dbReference>
<dbReference type="GO" id="GO:0005886">
    <property type="term" value="C:plasma membrane"/>
    <property type="evidence" value="ECO:0007669"/>
    <property type="project" value="UniProtKB-SubCell"/>
</dbReference>
<dbReference type="HAMAP" id="MF_00386">
    <property type="entry name" value="UPF0161_YidD"/>
    <property type="match status" value="1"/>
</dbReference>
<dbReference type="InterPro" id="IPR002696">
    <property type="entry name" value="Membr_insert_effic_factor_YidD"/>
</dbReference>
<dbReference type="NCBIfam" id="TIGR00278">
    <property type="entry name" value="membrane protein insertion efficiency factor YidD"/>
    <property type="match status" value="1"/>
</dbReference>
<dbReference type="PANTHER" id="PTHR33383">
    <property type="entry name" value="MEMBRANE PROTEIN INSERTION EFFICIENCY FACTOR-RELATED"/>
    <property type="match status" value="1"/>
</dbReference>
<dbReference type="PANTHER" id="PTHR33383:SF1">
    <property type="entry name" value="MEMBRANE PROTEIN INSERTION EFFICIENCY FACTOR-RELATED"/>
    <property type="match status" value="1"/>
</dbReference>
<dbReference type="Pfam" id="PF01809">
    <property type="entry name" value="YidD"/>
    <property type="match status" value="1"/>
</dbReference>
<dbReference type="SMART" id="SM01234">
    <property type="entry name" value="Haemolytic"/>
    <property type="match status" value="1"/>
</dbReference>
<name>YIDD_SALEP</name>
<organism>
    <name type="scientific">Salmonella enteritidis PT4 (strain P125109)</name>
    <dbReference type="NCBI Taxonomy" id="550537"/>
    <lineage>
        <taxon>Bacteria</taxon>
        <taxon>Pseudomonadati</taxon>
        <taxon>Pseudomonadota</taxon>
        <taxon>Gammaproteobacteria</taxon>
        <taxon>Enterobacterales</taxon>
        <taxon>Enterobacteriaceae</taxon>
        <taxon>Salmonella</taxon>
    </lineage>
</organism>
<feature type="chain" id="PRO_1000197776" description="Putative membrane protein insertion efficiency factor">
    <location>
        <begin position="1"/>
        <end position="85"/>
    </location>
</feature>
<evidence type="ECO:0000255" key="1">
    <source>
        <dbReference type="HAMAP-Rule" id="MF_00386"/>
    </source>
</evidence>
<comment type="function">
    <text evidence="1">Could be involved in insertion of integral membrane proteins into the membrane.</text>
</comment>
<comment type="subcellular location">
    <subcellularLocation>
        <location evidence="1">Cell inner membrane</location>
        <topology evidence="1">Peripheral membrane protein</topology>
        <orientation evidence="1">Cytoplasmic side</orientation>
    </subcellularLocation>
</comment>
<comment type="similarity">
    <text evidence="1">Belongs to the UPF0161 family.</text>
</comment>
<proteinExistence type="inferred from homology"/>
<sequence>MAPPLSPGSRVLIALIRVYQRLISPLLGPHCRFTPTCSSYGIEALRRFGVIKGSWLTVKRVLKCHPLHPGGDDPVPPGPFDTREH</sequence>
<gene>
    <name evidence="1" type="primary">yidD</name>
    <name type="ordered locus">SEN3658</name>
</gene>
<reference key="1">
    <citation type="journal article" date="2008" name="Genome Res.">
        <title>Comparative genome analysis of Salmonella enteritidis PT4 and Salmonella gallinarum 287/91 provides insights into evolutionary and host adaptation pathways.</title>
        <authorList>
            <person name="Thomson N.R."/>
            <person name="Clayton D.J."/>
            <person name="Windhorst D."/>
            <person name="Vernikos G."/>
            <person name="Davidson S."/>
            <person name="Churcher C."/>
            <person name="Quail M.A."/>
            <person name="Stevens M."/>
            <person name="Jones M.A."/>
            <person name="Watson M."/>
            <person name="Barron A."/>
            <person name="Layton A."/>
            <person name="Pickard D."/>
            <person name="Kingsley R.A."/>
            <person name="Bignell A."/>
            <person name="Clark L."/>
            <person name="Harris B."/>
            <person name="Ormond D."/>
            <person name="Abdellah Z."/>
            <person name="Brooks K."/>
            <person name="Cherevach I."/>
            <person name="Chillingworth T."/>
            <person name="Woodward J."/>
            <person name="Norberczak H."/>
            <person name="Lord A."/>
            <person name="Arrowsmith C."/>
            <person name="Jagels K."/>
            <person name="Moule S."/>
            <person name="Mungall K."/>
            <person name="Saunders M."/>
            <person name="Whitehead S."/>
            <person name="Chabalgoity J.A."/>
            <person name="Maskell D."/>
            <person name="Humphreys T."/>
            <person name="Roberts M."/>
            <person name="Barrow P.A."/>
            <person name="Dougan G."/>
            <person name="Parkhill J."/>
        </authorList>
    </citation>
    <scope>NUCLEOTIDE SEQUENCE [LARGE SCALE GENOMIC DNA]</scope>
    <source>
        <strain>P125109</strain>
    </source>
</reference>
<protein>
    <recommendedName>
        <fullName evidence="1">Putative membrane protein insertion efficiency factor</fullName>
    </recommendedName>
</protein>
<keyword id="KW-0997">Cell inner membrane</keyword>
<keyword id="KW-1003">Cell membrane</keyword>
<keyword id="KW-0472">Membrane</keyword>